<accession>B2K867</accession>
<comment type="function">
    <text evidence="1">Involved in the final reduction of the elongation cycle of fatty acid synthesis (FAS II). Catalyzes the reduction of a carbon-carbon double bond in an enoyl moiety that is covalently linked to an acyl carrier protein (ACP).</text>
</comment>
<comment type="catalytic activity">
    <reaction evidence="1">
        <text>a 2,3-saturated acyl-[ACP] + NAD(+) = a (2E)-enoyl-[ACP] + NADH + H(+)</text>
        <dbReference type="Rhea" id="RHEA:10240"/>
        <dbReference type="Rhea" id="RHEA-COMP:9925"/>
        <dbReference type="Rhea" id="RHEA-COMP:9926"/>
        <dbReference type="ChEBI" id="CHEBI:15378"/>
        <dbReference type="ChEBI" id="CHEBI:57540"/>
        <dbReference type="ChEBI" id="CHEBI:57945"/>
        <dbReference type="ChEBI" id="CHEBI:78784"/>
        <dbReference type="ChEBI" id="CHEBI:78785"/>
        <dbReference type="EC" id="1.3.1.9"/>
    </reaction>
</comment>
<comment type="pathway">
    <text evidence="1">Lipid metabolism; fatty acid biosynthesis.</text>
</comment>
<comment type="subunit">
    <text evidence="1">Monomer.</text>
</comment>
<comment type="similarity">
    <text evidence="1">Belongs to the TER reductase family.</text>
</comment>
<reference key="1">
    <citation type="submission" date="2008-04" db="EMBL/GenBank/DDBJ databases">
        <title>Complete sequence of Yersinia pseudotuberculosis PB1/+.</title>
        <authorList>
            <person name="Copeland A."/>
            <person name="Lucas S."/>
            <person name="Lapidus A."/>
            <person name="Glavina del Rio T."/>
            <person name="Dalin E."/>
            <person name="Tice H."/>
            <person name="Bruce D."/>
            <person name="Goodwin L."/>
            <person name="Pitluck S."/>
            <person name="Munk A.C."/>
            <person name="Brettin T."/>
            <person name="Detter J.C."/>
            <person name="Han C."/>
            <person name="Tapia R."/>
            <person name="Schmutz J."/>
            <person name="Larimer F."/>
            <person name="Land M."/>
            <person name="Hauser L."/>
            <person name="Challacombe J.F."/>
            <person name="Green L."/>
            <person name="Lindler L.E."/>
            <person name="Nikolich M.P."/>
            <person name="Richardson P."/>
        </authorList>
    </citation>
    <scope>NUCLEOTIDE SEQUENCE [LARGE SCALE GENOMIC DNA]</scope>
    <source>
        <strain>PB1/+</strain>
    </source>
</reference>
<feature type="chain" id="PRO_1000188373" description="Enoyl-[acyl-carrier-protein] reductase [NADH]">
    <location>
        <begin position="1"/>
        <end position="399"/>
    </location>
</feature>
<feature type="active site" description="Proton donor" evidence="1">
    <location>
        <position position="235"/>
    </location>
</feature>
<feature type="binding site" evidence="1">
    <location>
        <begin position="48"/>
        <end position="53"/>
    </location>
    <ligand>
        <name>NAD(+)</name>
        <dbReference type="ChEBI" id="CHEBI:57540"/>
    </ligand>
</feature>
<feature type="binding site" evidence="1">
    <location>
        <begin position="74"/>
        <end position="75"/>
    </location>
    <ligand>
        <name>NAD(+)</name>
        <dbReference type="ChEBI" id="CHEBI:57540"/>
    </ligand>
</feature>
<feature type="binding site" evidence="1">
    <location>
        <begin position="111"/>
        <end position="112"/>
    </location>
    <ligand>
        <name>NAD(+)</name>
        <dbReference type="ChEBI" id="CHEBI:57540"/>
    </ligand>
</feature>
<feature type="binding site" evidence="1">
    <location>
        <begin position="139"/>
        <end position="140"/>
    </location>
    <ligand>
        <name>NAD(+)</name>
        <dbReference type="ChEBI" id="CHEBI:57540"/>
    </ligand>
</feature>
<feature type="binding site" evidence="1">
    <location>
        <position position="225"/>
    </location>
    <ligand>
        <name>substrate</name>
    </ligand>
</feature>
<feature type="binding site" evidence="1">
    <location>
        <position position="244"/>
    </location>
    <ligand>
        <name>NAD(+)</name>
        <dbReference type="ChEBI" id="CHEBI:57540"/>
    </ligand>
</feature>
<feature type="binding site" evidence="1">
    <location>
        <begin position="274"/>
        <end position="276"/>
    </location>
    <ligand>
        <name>NAD(+)</name>
        <dbReference type="ChEBI" id="CHEBI:57540"/>
    </ligand>
</feature>
<feature type="site" description="Plays an important role in discriminating NADH against NADPH" evidence="1">
    <location>
        <position position="75"/>
    </location>
</feature>
<keyword id="KW-0275">Fatty acid biosynthesis</keyword>
<keyword id="KW-0276">Fatty acid metabolism</keyword>
<keyword id="KW-0444">Lipid biosynthesis</keyword>
<keyword id="KW-0443">Lipid metabolism</keyword>
<keyword id="KW-0520">NAD</keyword>
<keyword id="KW-0560">Oxidoreductase</keyword>
<evidence type="ECO:0000255" key="1">
    <source>
        <dbReference type="HAMAP-Rule" id="MF_01838"/>
    </source>
</evidence>
<organism>
    <name type="scientific">Yersinia pseudotuberculosis serotype IB (strain PB1/+)</name>
    <dbReference type="NCBI Taxonomy" id="502801"/>
    <lineage>
        <taxon>Bacteria</taxon>
        <taxon>Pseudomonadati</taxon>
        <taxon>Pseudomonadota</taxon>
        <taxon>Gammaproteobacteria</taxon>
        <taxon>Enterobacterales</taxon>
        <taxon>Yersiniaceae</taxon>
        <taxon>Yersinia</taxon>
    </lineage>
</organism>
<dbReference type="EC" id="1.3.1.9" evidence="1"/>
<dbReference type="EMBL" id="CP001048">
    <property type="protein sequence ID" value="ACC91143.1"/>
    <property type="molecule type" value="Genomic_DNA"/>
</dbReference>
<dbReference type="RefSeq" id="WP_002215588.1">
    <property type="nucleotide sequence ID" value="NZ_CP009780.1"/>
</dbReference>
<dbReference type="SMR" id="B2K867"/>
<dbReference type="GeneID" id="57974620"/>
<dbReference type="KEGG" id="ypb:YPTS_4200"/>
<dbReference type="PATRIC" id="fig|502801.10.peg.3669"/>
<dbReference type="UniPathway" id="UPA00094"/>
<dbReference type="GO" id="GO:0004318">
    <property type="term" value="F:enoyl-[acyl-carrier-protein] reductase (NADH) activity"/>
    <property type="evidence" value="ECO:0007669"/>
    <property type="project" value="UniProtKB-UniRule"/>
</dbReference>
<dbReference type="GO" id="GO:0051287">
    <property type="term" value="F:NAD binding"/>
    <property type="evidence" value="ECO:0007669"/>
    <property type="project" value="UniProtKB-UniRule"/>
</dbReference>
<dbReference type="GO" id="GO:0050343">
    <property type="term" value="F:trans-2-enoyl-CoA reductase (NADH) activity"/>
    <property type="evidence" value="ECO:0007669"/>
    <property type="project" value="TreeGrafter"/>
</dbReference>
<dbReference type="GO" id="GO:0006633">
    <property type="term" value="P:fatty acid biosynthetic process"/>
    <property type="evidence" value="ECO:0007669"/>
    <property type="project" value="UniProtKB-UniRule"/>
</dbReference>
<dbReference type="FunFam" id="3.40.50.720:FF:000221">
    <property type="entry name" value="Enoyl-[acyl-carrier-protein] reductase [NADH]"/>
    <property type="match status" value="1"/>
</dbReference>
<dbReference type="Gene3D" id="3.40.50.720">
    <property type="entry name" value="NAD(P)-binding Rossmann-like Domain"/>
    <property type="match status" value="1"/>
</dbReference>
<dbReference type="HAMAP" id="MF_01838">
    <property type="entry name" value="FabV_reductase"/>
    <property type="match status" value="1"/>
</dbReference>
<dbReference type="InterPro" id="IPR024906">
    <property type="entry name" value="Eno_Rdtase_FAD-bd_dom"/>
</dbReference>
<dbReference type="InterPro" id="IPR024910">
    <property type="entry name" value="Enoyl-CoA_Rdtase_cat_dom"/>
</dbReference>
<dbReference type="InterPro" id="IPR050048">
    <property type="entry name" value="FabV-like_NADH_b"/>
</dbReference>
<dbReference type="InterPro" id="IPR010758">
    <property type="entry name" value="Trans-2-enoyl-CoA_reductase"/>
</dbReference>
<dbReference type="NCBIfam" id="NF043048">
    <property type="entry name" value="EnoyACPredFabV"/>
    <property type="match status" value="1"/>
</dbReference>
<dbReference type="NCBIfam" id="NF010177">
    <property type="entry name" value="PRK13656.1"/>
    <property type="match status" value="1"/>
</dbReference>
<dbReference type="PANTHER" id="PTHR37480">
    <property type="entry name" value="ENOYL-[ACYL-CARRIER-PROTEIN] REDUCTASE [NADH]"/>
    <property type="match status" value="1"/>
</dbReference>
<dbReference type="PANTHER" id="PTHR37480:SF1">
    <property type="entry name" value="ENOYL-[ACYL-CARRIER-PROTEIN] REDUCTASE [NADH]"/>
    <property type="match status" value="1"/>
</dbReference>
<dbReference type="Pfam" id="PF07055">
    <property type="entry name" value="Eno-Rase_FAD_bd"/>
    <property type="match status" value="1"/>
</dbReference>
<dbReference type="Pfam" id="PF12242">
    <property type="entry name" value="Eno-Rase_NADH_b"/>
    <property type="match status" value="1"/>
</dbReference>
<dbReference type="Pfam" id="PF12241">
    <property type="entry name" value="Enoyl_reductase"/>
    <property type="match status" value="1"/>
</dbReference>
<gene>
    <name evidence="1" type="primary">fabV</name>
    <name type="ordered locus">YPTS_4200</name>
</gene>
<name>FABV_YERPB</name>
<protein>
    <recommendedName>
        <fullName evidence="1">Enoyl-[acyl-carrier-protein] reductase [NADH]</fullName>
        <shortName evidence="1">ENR</shortName>
        <ecNumber evidence="1">1.3.1.9</ecNumber>
    </recommendedName>
</protein>
<sequence>MIIKPRVRGFICVTAHPTGCEANVKKQIDYVTTEGPIANGPKRVLVIGASTGYGLAARITAAFGCGADTLGVFFERPGEEGKPGTSGWYNSAAFHKFAAQKGLYAKSINGDAFSDEIKQLTIDAIKQDLGQVDQVIYSLASPRRTHPKTGEVFNSALKPIGNAVNLRGLDTDKEVIKESVLQPATQSEIDSTVAVMGGEDWQMWIDALLDAGVLAEGAQTTAFTYLGEKITHDIYWNGSIGAAKKDLDQKVLAIRESLAAHGGGDARVSVLKAVVTQASSAIPMMPLYLSLLFKVMKEKGTHEGCIEQVYSLYKDSLCGDSPHMDQEGRLRADYKELDPEVQNQVQQLWDQVTNDNIYQLTDFVGYKSEFLNLFGFGIDGVDYDADVNPDVKIPNLIQG</sequence>
<proteinExistence type="inferred from homology"/>